<feature type="chain" id="PRO_1000051636" description="L-threonine 3-dehydrogenase">
    <location>
        <begin position="1"/>
        <end position="351"/>
    </location>
</feature>
<feature type="active site" description="Charge relay system" evidence="1">
    <location>
        <position position="41"/>
    </location>
</feature>
<feature type="active site" description="Charge relay system" evidence="1">
    <location>
        <position position="44"/>
    </location>
</feature>
<feature type="binding site" evidence="1">
    <location>
        <position position="39"/>
    </location>
    <ligand>
        <name>Zn(2+)</name>
        <dbReference type="ChEBI" id="CHEBI:29105"/>
        <label>1</label>
        <note>catalytic</note>
    </ligand>
</feature>
<feature type="binding site" evidence="1">
    <location>
        <position position="64"/>
    </location>
    <ligand>
        <name>Zn(2+)</name>
        <dbReference type="ChEBI" id="CHEBI:29105"/>
        <label>1</label>
        <note>catalytic</note>
    </ligand>
</feature>
<feature type="binding site" evidence="1">
    <location>
        <position position="65"/>
    </location>
    <ligand>
        <name>Zn(2+)</name>
        <dbReference type="ChEBI" id="CHEBI:29105"/>
        <label>1</label>
        <note>catalytic</note>
    </ligand>
</feature>
<feature type="binding site" evidence="1">
    <location>
        <position position="94"/>
    </location>
    <ligand>
        <name>Zn(2+)</name>
        <dbReference type="ChEBI" id="CHEBI:29105"/>
        <label>2</label>
    </ligand>
</feature>
<feature type="binding site" evidence="1">
    <location>
        <position position="97"/>
    </location>
    <ligand>
        <name>Zn(2+)</name>
        <dbReference type="ChEBI" id="CHEBI:29105"/>
        <label>2</label>
    </ligand>
</feature>
<feature type="binding site" evidence="1">
    <location>
        <position position="100"/>
    </location>
    <ligand>
        <name>Zn(2+)</name>
        <dbReference type="ChEBI" id="CHEBI:29105"/>
        <label>2</label>
    </ligand>
</feature>
<feature type="binding site" evidence="1">
    <location>
        <position position="108"/>
    </location>
    <ligand>
        <name>Zn(2+)</name>
        <dbReference type="ChEBI" id="CHEBI:29105"/>
        <label>2</label>
    </ligand>
</feature>
<feature type="binding site" evidence="1">
    <location>
        <position position="176"/>
    </location>
    <ligand>
        <name>NAD(+)</name>
        <dbReference type="ChEBI" id="CHEBI:57540"/>
    </ligand>
</feature>
<feature type="binding site" evidence="1">
    <location>
        <position position="196"/>
    </location>
    <ligand>
        <name>NAD(+)</name>
        <dbReference type="ChEBI" id="CHEBI:57540"/>
    </ligand>
</feature>
<feature type="binding site" evidence="1">
    <location>
        <position position="201"/>
    </location>
    <ligand>
        <name>NAD(+)</name>
        <dbReference type="ChEBI" id="CHEBI:57540"/>
    </ligand>
</feature>
<feature type="binding site" evidence="1">
    <location>
        <begin position="271"/>
        <end position="273"/>
    </location>
    <ligand>
        <name>NAD(+)</name>
        <dbReference type="ChEBI" id="CHEBI:57540"/>
    </ligand>
</feature>
<feature type="binding site" evidence="1">
    <location>
        <begin position="295"/>
        <end position="296"/>
    </location>
    <ligand>
        <name>NAD(+)</name>
        <dbReference type="ChEBI" id="CHEBI:57540"/>
    </ligand>
</feature>
<feature type="site" description="Important for catalytic activity for the proton relay mechanism but does not participate directly in the coordination of zinc atom" evidence="1">
    <location>
        <position position="149"/>
    </location>
</feature>
<protein>
    <recommendedName>
        <fullName evidence="1">L-threonine 3-dehydrogenase</fullName>
        <shortName evidence="1">TDH</shortName>
        <ecNumber evidence="1">1.1.1.103</ecNumber>
    </recommendedName>
</protein>
<accession>Q14IB6</accession>
<organism>
    <name type="scientific">Francisella tularensis subsp. tularensis (strain FSC 198)</name>
    <dbReference type="NCBI Taxonomy" id="393115"/>
    <lineage>
        <taxon>Bacteria</taxon>
        <taxon>Pseudomonadati</taxon>
        <taxon>Pseudomonadota</taxon>
        <taxon>Gammaproteobacteria</taxon>
        <taxon>Thiotrichales</taxon>
        <taxon>Francisellaceae</taxon>
        <taxon>Francisella</taxon>
    </lineage>
</organism>
<sequence>MKALAKLKKQPGIWIINDAPIPEYGYNDVLIKIKKTAICGTDLHIYNWDKWSQNTIPVPMITGHEFAGEVVAKGDGVTSVDIGDRVSGEGHLVCGQCRNCRAGKRHLCRKTIGIGVNVQGAFAEYLVMPAVNVFKIPDSISDDIASTFDPMGNAIHTALSFNLTGEDVLITGAGPIGLMAVKIARFCGARRIVITDINEYRLQMARDFGATVALNVAPFKNQDELVKQMRKVMSDIGMTEGFDVGLEMSGINSAISMMLDVMNHGGKLSLLGISAGDISVDWGAILFKGLTLKGIYGREMFETWYLMTSMLQAGMDMNPIITHRLHIDEFQKGFEIMKSGQCGKVILDWSS</sequence>
<proteinExistence type="inferred from homology"/>
<dbReference type="EC" id="1.1.1.103" evidence="1"/>
<dbReference type="EMBL" id="AM286280">
    <property type="protein sequence ID" value="CAL08729.1"/>
    <property type="molecule type" value="Genomic_DNA"/>
</dbReference>
<dbReference type="RefSeq" id="WP_003020520.1">
    <property type="nucleotide sequence ID" value="NC_008245.1"/>
</dbReference>
<dbReference type="SMR" id="Q14IB6"/>
<dbReference type="KEGG" id="ftf:FTF0713c"/>
<dbReference type="HOGENOM" id="CLU_026673_11_0_6"/>
<dbReference type="UniPathway" id="UPA00046">
    <property type="reaction ID" value="UER00505"/>
</dbReference>
<dbReference type="GO" id="GO:0005737">
    <property type="term" value="C:cytoplasm"/>
    <property type="evidence" value="ECO:0007669"/>
    <property type="project" value="UniProtKB-SubCell"/>
</dbReference>
<dbReference type="GO" id="GO:0008743">
    <property type="term" value="F:L-threonine 3-dehydrogenase activity"/>
    <property type="evidence" value="ECO:0007669"/>
    <property type="project" value="UniProtKB-UniRule"/>
</dbReference>
<dbReference type="GO" id="GO:0008270">
    <property type="term" value="F:zinc ion binding"/>
    <property type="evidence" value="ECO:0007669"/>
    <property type="project" value="UniProtKB-UniRule"/>
</dbReference>
<dbReference type="GO" id="GO:0019518">
    <property type="term" value="P:L-threonine catabolic process to glycine"/>
    <property type="evidence" value="ECO:0007669"/>
    <property type="project" value="UniProtKB-UniPathway"/>
</dbReference>
<dbReference type="Gene3D" id="3.90.180.10">
    <property type="entry name" value="Medium-chain alcohol dehydrogenases, catalytic domain"/>
    <property type="match status" value="1"/>
</dbReference>
<dbReference type="Gene3D" id="3.40.50.720">
    <property type="entry name" value="NAD(P)-binding Rossmann-like Domain"/>
    <property type="match status" value="1"/>
</dbReference>
<dbReference type="HAMAP" id="MF_00627">
    <property type="entry name" value="Thr_dehydrog"/>
    <property type="match status" value="1"/>
</dbReference>
<dbReference type="InterPro" id="IPR013149">
    <property type="entry name" value="ADH-like_C"/>
</dbReference>
<dbReference type="InterPro" id="IPR013154">
    <property type="entry name" value="ADH-like_N"/>
</dbReference>
<dbReference type="InterPro" id="IPR002328">
    <property type="entry name" value="ADH_Zn_CS"/>
</dbReference>
<dbReference type="InterPro" id="IPR011032">
    <property type="entry name" value="GroES-like_sf"/>
</dbReference>
<dbReference type="InterPro" id="IPR004627">
    <property type="entry name" value="L-Threonine_3-DHase"/>
</dbReference>
<dbReference type="InterPro" id="IPR036291">
    <property type="entry name" value="NAD(P)-bd_dom_sf"/>
</dbReference>
<dbReference type="InterPro" id="IPR050129">
    <property type="entry name" value="Zn_alcohol_dh"/>
</dbReference>
<dbReference type="NCBIfam" id="NF003808">
    <property type="entry name" value="PRK05396.1"/>
    <property type="match status" value="1"/>
</dbReference>
<dbReference type="NCBIfam" id="TIGR00692">
    <property type="entry name" value="tdh"/>
    <property type="match status" value="1"/>
</dbReference>
<dbReference type="PANTHER" id="PTHR43401">
    <property type="entry name" value="L-THREONINE 3-DEHYDROGENASE"/>
    <property type="match status" value="1"/>
</dbReference>
<dbReference type="PANTHER" id="PTHR43401:SF2">
    <property type="entry name" value="L-THREONINE 3-DEHYDROGENASE"/>
    <property type="match status" value="1"/>
</dbReference>
<dbReference type="Pfam" id="PF08240">
    <property type="entry name" value="ADH_N"/>
    <property type="match status" value="1"/>
</dbReference>
<dbReference type="Pfam" id="PF00107">
    <property type="entry name" value="ADH_zinc_N"/>
    <property type="match status" value="1"/>
</dbReference>
<dbReference type="SUPFAM" id="SSF50129">
    <property type="entry name" value="GroES-like"/>
    <property type="match status" value="1"/>
</dbReference>
<dbReference type="SUPFAM" id="SSF51735">
    <property type="entry name" value="NAD(P)-binding Rossmann-fold domains"/>
    <property type="match status" value="1"/>
</dbReference>
<dbReference type="PROSITE" id="PS00059">
    <property type="entry name" value="ADH_ZINC"/>
    <property type="match status" value="1"/>
</dbReference>
<comment type="function">
    <text evidence="1">Catalyzes the NAD(+)-dependent oxidation of L-threonine to 2-amino-3-ketobutyrate.</text>
</comment>
<comment type="catalytic activity">
    <reaction evidence="1">
        <text>L-threonine + NAD(+) = (2S)-2-amino-3-oxobutanoate + NADH + H(+)</text>
        <dbReference type="Rhea" id="RHEA:13161"/>
        <dbReference type="ChEBI" id="CHEBI:15378"/>
        <dbReference type="ChEBI" id="CHEBI:57540"/>
        <dbReference type="ChEBI" id="CHEBI:57926"/>
        <dbReference type="ChEBI" id="CHEBI:57945"/>
        <dbReference type="ChEBI" id="CHEBI:78948"/>
        <dbReference type="EC" id="1.1.1.103"/>
    </reaction>
</comment>
<comment type="cofactor">
    <cofactor evidence="1">
        <name>Zn(2+)</name>
        <dbReference type="ChEBI" id="CHEBI:29105"/>
    </cofactor>
    <text evidence="1">Binds 2 Zn(2+) ions per subunit.</text>
</comment>
<comment type="pathway">
    <text evidence="1">Amino-acid degradation; L-threonine degradation via oxydo-reductase pathway; glycine from L-threonine: step 1/2.</text>
</comment>
<comment type="subunit">
    <text evidence="1">Homotetramer.</text>
</comment>
<comment type="subcellular location">
    <subcellularLocation>
        <location evidence="1">Cytoplasm</location>
    </subcellularLocation>
</comment>
<comment type="similarity">
    <text evidence="1">Belongs to the zinc-containing alcohol dehydrogenase family.</text>
</comment>
<keyword id="KW-0963">Cytoplasm</keyword>
<keyword id="KW-0479">Metal-binding</keyword>
<keyword id="KW-0520">NAD</keyword>
<keyword id="KW-0560">Oxidoreductase</keyword>
<keyword id="KW-0862">Zinc</keyword>
<name>TDH_FRAT1</name>
<reference key="1">
    <citation type="journal article" date="2007" name="PLoS ONE">
        <title>Genome sequencing shows that European isolates of Francisella tularensis subspecies tularensis are almost identical to US laboratory strain Schu S4.</title>
        <authorList>
            <person name="Chaudhuri R.R."/>
            <person name="Ren C.-P."/>
            <person name="Desmond L."/>
            <person name="Vincent G.A."/>
            <person name="Silman N.J."/>
            <person name="Brehm J.K."/>
            <person name="Elmore M.J."/>
            <person name="Hudson M.J."/>
            <person name="Forsman M."/>
            <person name="Isherwood K.E."/>
            <person name="Gurycova D."/>
            <person name="Minton N.P."/>
            <person name="Titball R.W."/>
            <person name="Pallen M.J."/>
            <person name="Vipond R."/>
        </authorList>
    </citation>
    <scope>NUCLEOTIDE SEQUENCE [LARGE SCALE GENOMIC DNA]</scope>
    <source>
        <strain>FSC 198</strain>
    </source>
</reference>
<gene>
    <name evidence="1" type="primary">tdh</name>
    <name type="ordered locus">FTF0713c</name>
</gene>
<evidence type="ECO:0000255" key="1">
    <source>
        <dbReference type="HAMAP-Rule" id="MF_00627"/>
    </source>
</evidence>